<name>SEP2B_OSTSE</name>
<reference key="1">
    <citation type="journal article" date="2021" name="Rapid Commun. Mass Spectrom.">
        <title>Manual mass spectrometry de novo sequencing of the anionic host defense peptides of the Cuban Treefrog Osteopilus septentrionalis.</title>
        <authorList>
            <person name="Samgina T.Y."/>
            <person name="Tolpina M.D."/>
            <person name="Surin A.K."/>
            <person name="Kovalev S.V."/>
            <person name="Bosch R.A."/>
            <person name="Alonso I.P."/>
            <person name="Garcia F.A."/>
            <person name="Gonzalez Lopez L.J."/>
            <person name="Lebedev A.T."/>
        </authorList>
    </citation>
    <scope>PROTEIN SEQUENCE</scope>
    <scope>MASS SPECTROMETRY</scope>
</reference>
<keyword id="KW-0903">Direct protein sequencing</keyword>
<keyword id="KW-0964">Secreted</keyword>
<feature type="chain" id="PRO_0000453947" description="Septenin 2b">
    <location>
        <begin position="1"/>
        <end position="23"/>
    </location>
</feature>
<feature type="unsure residue" description="L or I" evidence="1">
    <location>
        <position position="1"/>
    </location>
</feature>
<feature type="unsure residue" description="L or I" evidence="1">
    <location>
        <position position="2"/>
    </location>
</feature>
<feature type="unsure residue" description="L or I" evidence="1">
    <location>
        <position position="6"/>
    </location>
</feature>
<feature type="unsure residue" description="L or I" evidence="1">
    <location>
        <position position="10"/>
    </location>
</feature>
<feature type="unsure residue" description="L or I" evidence="1">
    <location>
        <position position="16"/>
    </location>
</feature>
<feature type="unsure residue" description="L or I" evidence="1">
    <location>
        <position position="20"/>
    </location>
</feature>
<feature type="unsure residue" description="L or I" evidence="1">
    <location>
        <position position="22"/>
    </location>
</feature>
<feature type="unsure residue" description="L or I" evidence="1">
    <location>
        <position position="23"/>
    </location>
</feature>
<sequence>IIGDEINGAITTADNIAGKIGII</sequence>
<accession>C0HLX4</accession>
<dbReference type="GO" id="GO:0005576">
    <property type="term" value="C:extracellular region"/>
    <property type="evidence" value="ECO:0007669"/>
    <property type="project" value="UniProtKB-SubCell"/>
</dbReference>
<evidence type="ECO:0000269" key="1">
    <source>
    </source>
</evidence>
<evidence type="ECO:0000303" key="2">
    <source>
    </source>
</evidence>
<evidence type="ECO:0000305" key="3"/>
<evidence type="ECO:0000305" key="4">
    <source>
    </source>
</evidence>
<organism>
    <name type="scientific">Osteopilus septentrionalis</name>
    <name type="common">Cuban treefrog</name>
    <dbReference type="NCBI Taxonomy" id="317373"/>
    <lineage>
        <taxon>Eukaryota</taxon>
        <taxon>Metazoa</taxon>
        <taxon>Chordata</taxon>
        <taxon>Craniata</taxon>
        <taxon>Vertebrata</taxon>
        <taxon>Euteleostomi</taxon>
        <taxon>Amphibia</taxon>
        <taxon>Batrachia</taxon>
        <taxon>Anura</taxon>
        <taxon>Neobatrachia</taxon>
        <taxon>Hyloidea</taxon>
        <taxon>Hylidae</taxon>
        <taxon>Hylinae</taxon>
        <taxon>Lophiohylini</taxon>
        <taxon>Osteopilus</taxon>
    </lineage>
</organism>
<proteinExistence type="evidence at protein level"/>
<comment type="function">
    <text evidence="2">May act as an antimicrobial peptide.</text>
</comment>
<comment type="subcellular location">
    <subcellularLocation>
        <location evidence="1">Secreted</location>
    </subcellularLocation>
</comment>
<comment type="tissue specificity">
    <text evidence="4">Expressed in skin glands.</text>
</comment>
<comment type="mass spectrometry"/>
<comment type="similarity">
    <text evidence="3">Belongs to the Frog skin active peptide (FSAP) family. Septenin subfamily.</text>
</comment>
<protein>
    <recommendedName>
        <fullName evidence="2">Septenin 2b</fullName>
    </recommendedName>
</protein>